<comment type="function">
    <text evidence="1">Necessary for efficient RNA polymerase transcription elongation past template-encoded arresting sites. The arresting sites in DNA have the property of trapping a certain fraction of elongating RNA polymerases that pass through, resulting in locked ternary complexes. Cleavage of the nascent transcript by cleavage factors such as GreA or GreB allows the resumption of elongation from the new 3'terminus. GreA releases sequences of 2 to 3 nucleotides.</text>
</comment>
<comment type="similarity">
    <text evidence="1">Belongs to the GreA/GreB family.</text>
</comment>
<sequence length="160" mass="17575">MSITKYPMTVQGARALEEEHLFLSKTERPRLSQAIGEARELGDLKENAEYHAAREEQGMVEARIRDIEGRLQNSVVIDVTTIPHTGKVIFGTTVVLANTETDEEVTYQIVGEDEADVKQGKLSSGAPIARAIIGKEEGDTVVVKTPSGTVEYEIVEVKHI</sequence>
<proteinExistence type="inferred from homology"/>
<feature type="chain" id="PRO_0000176954" description="Transcription elongation factor GreA">
    <location>
        <begin position="1"/>
        <end position="160"/>
    </location>
</feature>
<feature type="coiled-coil region" evidence="1">
    <location>
        <begin position="53"/>
        <end position="73"/>
    </location>
</feature>
<keyword id="KW-0175">Coiled coil</keyword>
<keyword id="KW-0238">DNA-binding</keyword>
<keyword id="KW-1185">Reference proteome</keyword>
<keyword id="KW-0804">Transcription</keyword>
<keyword id="KW-0805">Transcription regulation</keyword>
<protein>
    <recommendedName>
        <fullName evidence="1">Transcription elongation factor GreA</fullName>
    </recommendedName>
    <alternativeName>
        <fullName evidence="1">Transcript cleavage factor GreA</fullName>
    </alternativeName>
</protein>
<evidence type="ECO:0000255" key="1">
    <source>
        <dbReference type="HAMAP-Rule" id="MF_00105"/>
    </source>
</evidence>
<dbReference type="EMBL" id="AE015451">
    <property type="protein sequence ID" value="AAN70294.1"/>
    <property type="molecule type" value="Genomic_DNA"/>
</dbReference>
<dbReference type="RefSeq" id="NP_746830.1">
    <property type="nucleotide sequence ID" value="NC_002947.4"/>
</dbReference>
<dbReference type="RefSeq" id="WP_003249939.1">
    <property type="nucleotide sequence ID" value="NC_002947.4"/>
</dbReference>
<dbReference type="SMR" id="Q88DU7"/>
<dbReference type="STRING" id="160488.PP_4722"/>
<dbReference type="PaxDb" id="160488-PP_4722"/>
<dbReference type="GeneID" id="83682439"/>
<dbReference type="KEGG" id="ppu:PP_4722"/>
<dbReference type="PATRIC" id="fig|160488.4.peg.5033"/>
<dbReference type="eggNOG" id="COG0782">
    <property type="taxonomic scope" value="Bacteria"/>
</dbReference>
<dbReference type="HOGENOM" id="CLU_101379_2_0_6"/>
<dbReference type="OrthoDB" id="9808774at2"/>
<dbReference type="PhylomeDB" id="Q88DU7"/>
<dbReference type="BioCyc" id="PPUT160488:G1G01-5048-MONOMER"/>
<dbReference type="Proteomes" id="UP000000556">
    <property type="component" value="Chromosome"/>
</dbReference>
<dbReference type="GO" id="GO:0003677">
    <property type="term" value="F:DNA binding"/>
    <property type="evidence" value="ECO:0007669"/>
    <property type="project" value="UniProtKB-UniRule"/>
</dbReference>
<dbReference type="GO" id="GO:0070063">
    <property type="term" value="F:RNA polymerase binding"/>
    <property type="evidence" value="ECO:0007669"/>
    <property type="project" value="InterPro"/>
</dbReference>
<dbReference type="GO" id="GO:0006354">
    <property type="term" value="P:DNA-templated transcription elongation"/>
    <property type="evidence" value="ECO:0007669"/>
    <property type="project" value="TreeGrafter"/>
</dbReference>
<dbReference type="GO" id="GO:0032784">
    <property type="term" value="P:regulation of DNA-templated transcription elongation"/>
    <property type="evidence" value="ECO:0007669"/>
    <property type="project" value="UniProtKB-UniRule"/>
</dbReference>
<dbReference type="FunFam" id="1.10.287.180:FF:000001">
    <property type="entry name" value="Transcription elongation factor GreA"/>
    <property type="match status" value="1"/>
</dbReference>
<dbReference type="FunFam" id="3.10.50.30:FF:000001">
    <property type="entry name" value="Transcription elongation factor GreA"/>
    <property type="match status" value="1"/>
</dbReference>
<dbReference type="Gene3D" id="3.10.50.30">
    <property type="entry name" value="Transcription elongation factor, GreA/GreB, C-terminal domain"/>
    <property type="match status" value="1"/>
</dbReference>
<dbReference type="Gene3D" id="1.10.287.180">
    <property type="entry name" value="Transcription elongation factor, GreA/GreB, N-terminal domain"/>
    <property type="match status" value="1"/>
</dbReference>
<dbReference type="HAMAP" id="MF_00105">
    <property type="entry name" value="GreA_GreB"/>
    <property type="match status" value="1"/>
</dbReference>
<dbReference type="InterPro" id="IPR036953">
    <property type="entry name" value="GreA/GreB_C_sf"/>
</dbReference>
<dbReference type="InterPro" id="IPR018151">
    <property type="entry name" value="TF_GreA/GreB_CS"/>
</dbReference>
<dbReference type="InterPro" id="IPR006359">
    <property type="entry name" value="Tscrpt_elong_fac_GreA"/>
</dbReference>
<dbReference type="InterPro" id="IPR028624">
    <property type="entry name" value="Tscrpt_elong_fac_GreA/B"/>
</dbReference>
<dbReference type="InterPro" id="IPR001437">
    <property type="entry name" value="Tscrpt_elong_fac_GreA/B_C"/>
</dbReference>
<dbReference type="InterPro" id="IPR023459">
    <property type="entry name" value="Tscrpt_elong_fac_GreA/B_fam"/>
</dbReference>
<dbReference type="InterPro" id="IPR022691">
    <property type="entry name" value="Tscrpt_elong_fac_GreA/B_N"/>
</dbReference>
<dbReference type="InterPro" id="IPR036805">
    <property type="entry name" value="Tscrpt_elong_fac_GreA/B_N_sf"/>
</dbReference>
<dbReference type="NCBIfam" id="TIGR01462">
    <property type="entry name" value="greA"/>
    <property type="match status" value="1"/>
</dbReference>
<dbReference type="NCBIfam" id="NF001261">
    <property type="entry name" value="PRK00226.1-2"/>
    <property type="match status" value="1"/>
</dbReference>
<dbReference type="NCBIfam" id="NF001263">
    <property type="entry name" value="PRK00226.1-4"/>
    <property type="match status" value="1"/>
</dbReference>
<dbReference type="NCBIfam" id="NF001264">
    <property type="entry name" value="PRK00226.1-5"/>
    <property type="match status" value="1"/>
</dbReference>
<dbReference type="PANTHER" id="PTHR30437">
    <property type="entry name" value="TRANSCRIPTION ELONGATION FACTOR GREA"/>
    <property type="match status" value="1"/>
</dbReference>
<dbReference type="PANTHER" id="PTHR30437:SF4">
    <property type="entry name" value="TRANSCRIPTION ELONGATION FACTOR GREA"/>
    <property type="match status" value="1"/>
</dbReference>
<dbReference type="Pfam" id="PF01272">
    <property type="entry name" value="GreA_GreB"/>
    <property type="match status" value="1"/>
</dbReference>
<dbReference type="Pfam" id="PF03449">
    <property type="entry name" value="GreA_GreB_N"/>
    <property type="match status" value="1"/>
</dbReference>
<dbReference type="PIRSF" id="PIRSF006092">
    <property type="entry name" value="GreA_GreB"/>
    <property type="match status" value="1"/>
</dbReference>
<dbReference type="SUPFAM" id="SSF54534">
    <property type="entry name" value="FKBP-like"/>
    <property type="match status" value="1"/>
</dbReference>
<dbReference type="SUPFAM" id="SSF46557">
    <property type="entry name" value="GreA transcript cleavage protein, N-terminal domain"/>
    <property type="match status" value="1"/>
</dbReference>
<dbReference type="PROSITE" id="PS00829">
    <property type="entry name" value="GREAB_1"/>
    <property type="match status" value="1"/>
</dbReference>
<gene>
    <name evidence="1" type="primary">greA</name>
    <name type="ordered locus">PP_4722</name>
</gene>
<reference key="1">
    <citation type="journal article" date="2002" name="Environ. Microbiol.">
        <title>Complete genome sequence and comparative analysis of the metabolically versatile Pseudomonas putida KT2440.</title>
        <authorList>
            <person name="Nelson K.E."/>
            <person name="Weinel C."/>
            <person name="Paulsen I.T."/>
            <person name="Dodson R.J."/>
            <person name="Hilbert H."/>
            <person name="Martins dos Santos V.A.P."/>
            <person name="Fouts D.E."/>
            <person name="Gill S.R."/>
            <person name="Pop M."/>
            <person name="Holmes M."/>
            <person name="Brinkac L.M."/>
            <person name="Beanan M.J."/>
            <person name="DeBoy R.T."/>
            <person name="Daugherty S.C."/>
            <person name="Kolonay J.F."/>
            <person name="Madupu R."/>
            <person name="Nelson W.C."/>
            <person name="White O."/>
            <person name="Peterson J.D."/>
            <person name="Khouri H.M."/>
            <person name="Hance I."/>
            <person name="Chris Lee P."/>
            <person name="Holtzapple E.K."/>
            <person name="Scanlan D."/>
            <person name="Tran K."/>
            <person name="Moazzez A."/>
            <person name="Utterback T.R."/>
            <person name="Rizzo M."/>
            <person name="Lee K."/>
            <person name="Kosack D."/>
            <person name="Moestl D."/>
            <person name="Wedler H."/>
            <person name="Lauber J."/>
            <person name="Stjepandic D."/>
            <person name="Hoheisel J."/>
            <person name="Straetz M."/>
            <person name="Heim S."/>
            <person name="Kiewitz C."/>
            <person name="Eisen J.A."/>
            <person name="Timmis K.N."/>
            <person name="Duesterhoeft A."/>
            <person name="Tuemmler B."/>
            <person name="Fraser C.M."/>
        </authorList>
    </citation>
    <scope>NUCLEOTIDE SEQUENCE [LARGE SCALE GENOMIC DNA]</scope>
    <source>
        <strain>ATCC 47054 / DSM 6125 / CFBP 8728 / NCIMB 11950 / KT2440</strain>
    </source>
</reference>
<name>GREA_PSEPK</name>
<accession>Q88DU7</accession>
<organism>
    <name type="scientific">Pseudomonas putida (strain ATCC 47054 / DSM 6125 / CFBP 8728 / NCIMB 11950 / KT2440)</name>
    <dbReference type="NCBI Taxonomy" id="160488"/>
    <lineage>
        <taxon>Bacteria</taxon>
        <taxon>Pseudomonadati</taxon>
        <taxon>Pseudomonadota</taxon>
        <taxon>Gammaproteobacteria</taxon>
        <taxon>Pseudomonadales</taxon>
        <taxon>Pseudomonadaceae</taxon>
        <taxon>Pseudomonas</taxon>
    </lineage>
</organism>